<gene>
    <name evidence="1" type="primary">bioB</name>
    <name type="ordered locus">Aflv_1376</name>
</gene>
<protein>
    <recommendedName>
        <fullName evidence="1">Biotin synthase</fullName>
        <ecNumber evidence="1">2.8.1.6</ecNumber>
    </recommendedName>
</protein>
<feature type="chain" id="PRO_0000381205" description="Biotin synthase">
    <location>
        <begin position="1"/>
        <end position="329"/>
    </location>
</feature>
<feature type="domain" description="Radical SAM core" evidence="2">
    <location>
        <begin position="46"/>
        <end position="275"/>
    </location>
</feature>
<feature type="binding site" evidence="1">
    <location>
        <position position="64"/>
    </location>
    <ligand>
        <name>[4Fe-4S] cluster</name>
        <dbReference type="ChEBI" id="CHEBI:49883"/>
        <note>4Fe-4S-S-AdoMet</note>
    </ligand>
</feature>
<feature type="binding site" evidence="1">
    <location>
        <position position="68"/>
    </location>
    <ligand>
        <name>[4Fe-4S] cluster</name>
        <dbReference type="ChEBI" id="CHEBI:49883"/>
        <note>4Fe-4S-S-AdoMet</note>
    </ligand>
</feature>
<feature type="binding site" evidence="1">
    <location>
        <position position="71"/>
    </location>
    <ligand>
        <name>[4Fe-4S] cluster</name>
        <dbReference type="ChEBI" id="CHEBI:49883"/>
        <note>4Fe-4S-S-AdoMet</note>
    </ligand>
</feature>
<feature type="binding site" evidence="1">
    <location>
        <position position="108"/>
    </location>
    <ligand>
        <name>[2Fe-2S] cluster</name>
        <dbReference type="ChEBI" id="CHEBI:190135"/>
    </ligand>
</feature>
<feature type="binding site" evidence="1">
    <location>
        <position position="140"/>
    </location>
    <ligand>
        <name>[2Fe-2S] cluster</name>
        <dbReference type="ChEBI" id="CHEBI:190135"/>
    </ligand>
</feature>
<feature type="binding site" evidence="1">
    <location>
        <position position="200"/>
    </location>
    <ligand>
        <name>[2Fe-2S] cluster</name>
        <dbReference type="ChEBI" id="CHEBI:190135"/>
    </ligand>
</feature>
<feature type="binding site" evidence="1">
    <location>
        <position position="270"/>
    </location>
    <ligand>
        <name>[2Fe-2S] cluster</name>
        <dbReference type="ChEBI" id="CHEBI:190135"/>
    </ligand>
</feature>
<evidence type="ECO:0000255" key="1">
    <source>
        <dbReference type="HAMAP-Rule" id="MF_01694"/>
    </source>
</evidence>
<evidence type="ECO:0000255" key="2">
    <source>
        <dbReference type="PROSITE-ProRule" id="PRU01266"/>
    </source>
</evidence>
<evidence type="ECO:0000305" key="3"/>
<organism>
    <name type="scientific">Anoxybacillus flavithermus (strain DSM 21510 / WK1)</name>
    <dbReference type="NCBI Taxonomy" id="491915"/>
    <lineage>
        <taxon>Bacteria</taxon>
        <taxon>Bacillati</taxon>
        <taxon>Bacillota</taxon>
        <taxon>Bacilli</taxon>
        <taxon>Bacillales</taxon>
        <taxon>Anoxybacillaceae</taxon>
        <taxon>Anoxybacillus</taxon>
    </lineage>
</organism>
<sequence>MDWLLLANRVLDGADITDDEALAILNCPDDELLLLLQGAYRIRKTYYGNKVKLNMIMNAKSGLCPENCGYCSQSSISTAPIPTYKMVNKETILQGAKRAYEAKIGTYCIVASGRGPSDKEIDIVVSAVKEIKETYGLKVCACLGILKPEQALRLKEAGVDRYNHNINTSKEHHPHITTSHTYDDRVRTVETVKEAGMSPCSGVIIGMKETKQDVIAMARSLKALDADSIPVNFLHAIDGTPLEGTKELNPRYCLKVLALFRYINPTKEIRISGGREVNLRSLQPLGLYAANSIFVGDYLTTAGQEKHADFQMLEDLGFDIDFAPASYAR</sequence>
<proteinExistence type="inferred from homology"/>
<name>BIOB_ANOFW</name>
<accession>B7GKT8</accession>
<keyword id="KW-0001">2Fe-2S</keyword>
<keyword id="KW-0004">4Fe-4S</keyword>
<keyword id="KW-0093">Biotin biosynthesis</keyword>
<keyword id="KW-0408">Iron</keyword>
<keyword id="KW-0411">Iron-sulfur</keyword>
<keyword id="KW-0479">Metal-binding</keyword>
<keyword id="KW-0949">S-adenosyl-L-methionine</keyword>
<keyword id="KW-0808">Transferase</keyword>
<reference key="1">
    <citation type="journal article" date="2008" name="Genome Biol.">
        <title>Encapsulated in silica: genome, proteome and physiology of the thermophilic bacterium Anoxybacillus flavithermus WK1.</title>
        <authorList>
            <person name="Saw J.H."/>
            <person name="Mountain B.W."/>
            <person name="Feng L."/>
            <person name="Omelchenko M.V."/>
            <person name="Hou S."/>
            <person name="Saito J.A."/>
            <person name="Stott M.B."/>
            <person name="Li D."/>
            <person name="Zhao G."/>
            <person name="Wu J."/>
            <person name="Galperin M.Y."/>
            <person name="Koonin E.V."/>
            <person name="Makarova K.S."/>
            <person name="Wolf Y.I."/>
            <person name="Rigden D.J."/>
            <person name="Dunfield P.F."/>
            <person name="Wang L."/>
            <person name="Alam M."/>
        </authorList>
    </citation>
    <scope>NUCLEOTIDE SEQUENCE [LARGE SCALE GENOMIC DNA]</scope>
    <source>
        <strain>DSM 21510 / WK1</strain>
    </source>
</reference>
<comment type="function">
    <text evidence="1">Catalyzes the conversion of dethiobiotin (DTB) to biotin by the insertion of a sulfur atom into dethiobiotin via a radical-based mechanism.</text>
</comment>
<comment type="catalytic activity">
    <reaction evidence="1">
        <text>(4R,5S)-dethiobiotin + (sulfur carrier)-SH + 2 reduced [2Fe-2S]-[ferredoxin] + 2 S-adenosyl-L-methionine = (sulfur carrier)-H + biotin + 2 5'-deoxyadenosine + 2 L-methionine + 2 oxidized [2Fe-2S]-[ferredoxin]</text>
        <dbReference type="Rhea" id="RHEA:22060"/>
        <dbReference type="Rhea" id="RHEA-COMP:10000"/>
        <dbReference type="Rhea" id="RHEA-COMP:10001"/>
        <dbReference type="Rhea" id="RHEA-COMP:14737"/>
        <dbReference type="Rhea" id="RHEA-COMP:14739"/>
        <dbReference type="ChEBI" id="CHEBI:17319"/>
        <dbReference type="ChEBI" id="CHEBI:29917"/>
        <dbReference type="ChEBI" id="CHEBI:33737"/>
        <dbReference type="ChEBI" id="CHEBI:33738"/>
        <dbReference type="ChEBI" id="CHEBI:57586"/>
        <dbReference type="ChEBI" id="CHEBI:57844"/>
        <dbReference type="ChEBI" id="CHEBI:59789"/>
        <dbReference type="ChEBI" id="CHEBI:64428"/>
        <dbReference type="ChEBI" id="CHEBI:149473"/>
        <dbReference type="EC" id="2.8.1.6"/>
    </reaction>
</comment>
<comment type="cofactor">
    <cofactor evidence="1">
        <name>[4Fe-4S] cluster</name>
        <dbReference type="ChEBI" id="CHEBI:49883"/>
    </cofactor>
    <text evidence="1">Binds 1 [4Fe-4S] cluster. The cluster is coordinated with 3 cysteines and an exchangeable S-adenosyl-L-methionine.</text>
</comment>
<comment type="cofactor">
    <cofactor evidence="1">
        <name>[2Fe-2S] cluster</name>
        <dbReference type="ChEBI" id="CHEBI:190135"/>
    </cofactor>
    <text evidence="1">Binds 1 [2Fe-2S] cluster. The cluster is coordinated with 3 cysteines and 1 arginine.</text>
</comment>
<comment type="pathway">
    <text evidence="1">Cofactor biosynthesis; biotin biosynthesis; biotin from 7,8-diaminononanoate: step 2/2.</text>
</comment>
<comment type="subunit">
    <text evidence="1">Homodimer.</text>
</comment>
<comment type="similarity">
    <text evidence="1">Belongs to the radical SAM superfamily. Biotin synthase family.</text>
</comment>
<comment type="sequence caution" evidence="3">
    <conflict type="erroneous initiation">
        <sequence resource="EMBL-CDS" id="ACJ33744"/>
    </conflict>
</comment>
<dbReference type="EC" id="2.8.1.6" evidence="1"/>
<dbReference type="EMBL" id="CP000922">
    <property type="protein sequence ID" value="ACJ33744.1"/>
    <property type="status" value="ALT_INIT"/>
    <property type="molecule type" value="Genomic_DNA"/>
</dbReference>
<dbReference type="RefSeq" id="WP_041638366.1">
    <property type="nucleotide sequence ID" value="NC_011567.1"/>
</dbReference>
<dbReference type="SMR" id="B7GKT8"/>
<dbReference type="STRING" id="491915.Aflv_1376"/>
<dbReference type="GeneID" id="7037630"/>
<dbReference type="KEGG" id="afl:Aflv_1376"/>
<dbReference type="PATRIC" id="fig|491915.6.peg.1416"/>
<dbReference type="eggNOG" id="COG0502">
    <property type="taxonomic scope" value="Bacteria"/>
</dbReference>
<dbReference type="HOGENOM" id="CLU_033172_2_1_9"/>
<dbReference type="UniPathway" id="UPA00078">
    <property type="reaction ID" value="UER00162"/>
</dbReference>
<dbReference type="Proteomes" id="UP000000742">
    <property type="component" value="Chromosome"/>
</dbReference>
<dbReference type="GO" id="GO:0051537">
    <property type="term" value="F:2 iron, 2 sulfur cluster binding"/>
    <property type="evidence" value="ECO:0007669"/>
    <property type="project" value="UniProtKB-KW"/>
</dbReference>
<dbReference type="GO" id="GO:0051539">
    <property type="term" value="F:4 iron, 4 sulfur cluster binding"/>
    <property type="evidence" value="ECO:0007669"/>
    <property type="project" value="UniProtKB-KW"/>
</dbReference>
<dbReference type="GO" id="GO:0004076">
    <property type="term" value="F:biotin synthase activity"/>
    <property type="evidence" value="ECO:0007669"/>
    <property type="project" value="UniProtKB-UniRule"/>
</dbReference>
<dbReference type="GO" id="GO:0005506">
    <property type="term" value="F:iron ion binding"/>
    <property type="evidence" value="ECO:0007669"/>
    <property type="project" value="UniProtKB-UniRule"/>
</dbReference>
<dbReference type="GO" id="GO:0009102">
    <property type="term" value="P:biotin biosynthetic process"/>
    <property type="evidence" value="ECO:0007669"/>
    <property type="project" value="UniProtKB-UniRule"/>
</dbReference>
<dbReference type="CDD" id="cd01335">
    <property type="entry name" value="Radical_SAM"/>
    <property type="match status" value="1"/>
</dbReference>
<dbReference type="FunFam" id="3.20.20.70:FF:000026">
    <property type="entry name" value="Biotin synthase"/>
    <property type="match status" value="1"/>
</dbReference>
<dbReference type="Gene3D" id="3.20.20.70">
    <property type="entry name" value="Aldolase class I"/>
    <property type="match status" value="1"/>
</dbReference>
<dbReference type="HAMAP" id="MF_01694">
    <property type="entry name" value="BioB"/>
    <property type="match status" value="1"/>
</dbReference>
<dbReference type="InterPro" id="IPR013785">
    <property type="entry name" value="Aldolase_TIM"/>
</dbReference>
<dbReference type="InterPro" id="IPR010722">
    <property type="entry name" value="BATS_dom"/>
</dbReference>
<dbReference type="InterPro" id="IPR002684">
    <property type="entry name" value="Biotin_synth/BioAB"/>
</dbReference>
<dbReference type="InterPro" id="IPR024177">
    <property type="entry name" value="Biotin_synthase"/>
</dbReference>
<dbReference type="InterPro" id="IPR006638">
    <property type="entry name" value="Elp3/MiaA/NifB-like_rSAM"/>
</dbReference>
<dbReference type="InterPro" id="IPR007197">
    <property type="entry name" value="rSAM"/>
</dbReference>
<dbReference type="NCBIfam" id="TIGR00433">
    <property type="entry name" value="bioB"/>
    <property type="match status" value="1"/>
</dbReference>
<dbReference type="PANTHER" id="PTHR22976">
    <property type="entry name" value="BIOTIN SYNTHASE"/>
    <property type="match status" value="1"/>
</dbReference>
<dbReference type="PANTHER" id="PTHR22976:SF2">
    <property type="entry name" value="BIOTIN SYNTHASE, MITOCHONDRIAL"/>
    <property type="match status" value="1"/>
</dbReference>
<dbReference type="Pfam" id="PF06968">
    <property type="entry name" value="BATS"/>
    <property type="match status" value="1"/>
</dbReference>
<dbReference type="Pfam" id="PF04055">
    <property type="entry name" value="Radical_SAM"/>
    <property type="match status" value="1"/>
</dbReference>
<dbReference type="PIRSF" id="PIRSF001619">
    <property type="entry name" value="Biotin_synth"/>
    <property type="match status" value="1"/>
</dbReference>
<dbReference type="SFLD" id="SFLDG01060">
    <property type="entry name" value="BATS_domain_containing"/>
    <property type="match status" value="1"/>
</dbReference>
<dbReference type="SFLD" id="SFLDG01278">
    <property type="entry name" value="biotin_synthase_like"/>
    <property type="match status" value="1"/>
</dbReference>
<dbReference type="SMART" id="SM00876">
    <property type="entry name" value="BATS"/>
    <property type="match status" value="1"/>
</dbReference>
<dbReference type="SMART" id="SM00729">
    <property type="entry name" value="Elp3"/>
    <property type="match status" value="1"/>
</dbReference>
<dbReference type="SUPFAM" id="SSF102114">
    <property type="entry name" value="Radical SAM enzymes"/>
    <property type="match status" value="1"/>
</dbReference>
<dbReference type="PROSITE" id="PS51918">
    <property type="entry name" value="RADICAL_SAM"/>
    <property type="match status" value="1"/>
</dbReference>